<gene>
    <name evidence="8 11" type="primary">GluProRS</name>
    <name evidence="11" type="synonym">Aats-glupro</name>
    <name evidence="11" type="ORF">CG5394</name>
</gene>
<reference key="1">
    <citation type="journal article" date="1991" name="EMBO J.">
        <title>A component of the multisynthetase complex is a multifunctional aminoacyl-tRNA synthetase.</title>
        <authorList>
            <person name="Cerini C."/>
            <person name="Kerjan P."/>
            <person name="Astier M."/>
            <person name="Gratecos D."/>
            <person name="Mirande M."/>
            <person name="Semeriva M."/>
        </authorList>
    </citation>
    <scope>NUCLEOTIDE SEQUENCE [MRNA] (ISOFORM A)</scope>
    <scope>FUNCTION</scope>
    <scope>CATALYTIC ACTIVITY</scope>
    <scope>MOTIF</scope>
    <scope>REGION</scope>
</reference>
<reference key="2">
    <citation type="journal article" date="1997" name="Eur. J. Biochem.">
        <title>Evolution of the aminoacyl-tRNA synthetase family and the organization of the Drosophila glutamyl-prolyl-tRNA synthetase gene. Intron/exon structure of the gene, control of expression of the two mRNAs, selective advantage of the multienzyme complex.</title>
        <authorList>
            <person name="Cerini C."/>
            <person name="Semeriva M."/>
            <person name="Gratecos D."/>
        </authorList>
    </citation>
    <scope>NUCLEOTIDE SEQUENCE [GENOMIC DNA] (ISOFORM A)</scope>
    <source>
        <strain>Oregon-R</strain>
    </source>
</reference>
<reference key="3">
    <citation type="journal article" date="2000" name="Science">
        <title>The genome sequence of Drosophila melanogaster.</title>
        <authorList>
            <person name="Adams M.D."/>
            <person name="Celniker S.E."/>
            <person name="Holt R.A."/>
            <person name="Evans C.A."/>
            <person name="Gocayne J.D."/>
            <person name="Amanatides P.G."/>
            <person name="Scherer S.E."/>
            <person name="Li P.W."/>
            <person name="Hoskins R.A."/>
            <person name="Galle R.F."/>
            <person name="George R.A."/>
            <person name="Lewis S.E."/>
            <person name="Richards S."/>
            <person name="Ashburner M."/>
            <person name="Henderson S.N."/>
            <person name="Sutton G.G."/>
            <person name="Wortman J.R."/>
            <person name="Yandell M.D."/>
            <person name="Zhang Q."/>
            <person name="Chen L.X."/>
            <person name="Brandon R.C."/>
            <person name="Rogers Y.-H.C."/>
            <person name="Blazej R.G."/>
            <person name="Champe M."/>
            <person name="Pfeiffer B.D."/>
            <person name="Wan K.H."/>
            <person name="Doyle C."/>
            <person name="Baxter E.G."/>
            <person name="Helt G."/>
            <person name="Nelson C.R."/>
            <person name="Miklos G.L.G."/>
            <person name="Abril J.F."/>
            <person name="Agbayani A."/>
            <person name="An H.-J."/>
            <person name="Andrews-Pfannkoch C."/>
            <person name="Baldwin D."/>
            <person name="Ballew R.M."/>
            <person name="Basu A."/>
            <person name="Baxendale J."/>
            <person name="Bayraktaroglu L."/>
            <person name="Beasley E.M."/>
            <person name="Beeson K.Y."/>
            <person name="Benos P.V."/>
            <person name="Berman B.P."/>
            <person name="Bhandari D."/>
            <person name="Bolshakov S."/>
            <person name="Borkova D."/>
            <person name="Botchan M.R."/>
            <person name="Bouck J."/>
            <person name="Brokstein P."/>
            <person name="Brottier P."/>
            <person name="Burtis K.C."/>
            <person name="Busam D.A."/>
            <person name="Butler H."/>
            <person name="Cadieu E."/>
            <person name="Center A."/>
            <person name="Chandra I."/>
            <person name="Cherry J.M."/>
            <person name="Cawley S."/>
            <person name="Dahlke C."/>
            <person name="Davenport L.B."/>
            <person name="Davies P."/>
            <person name="de Pablos B."/>
            <person name="Delcher A."/>
            <person name="Deng Z."/>
            <person name="Mays A.D."/>
            <person name="Dew I."/>
            <person name="Dietz S.M."/>
            <person name="Dodson K."/>
            <person name="Doup L.E."/>
            <person name="Downes M."/>
            <person name="Dugan-Rocha S."/>
            <person name="Dunkov B.C."/>
            <person name="Dunn P."/>
            <person name="Durbin K.J."/>
            <person name="Evangelista C.C."/>
            <person name="Ferraz C."/>
            <person name="Ferriera S."/>
            <person name="Fleischmann W."/>
            <person name="Fosler C."/>
            <person name="Gabrielian A.E."/>
            <person name="Garg N.S."/>
            <person name="Gelbart W.M."/>
            <person name="Glasser K."/>
            <person name="Glodek A."/>
            <person name="Gong F."/>
            <person name="Gorrell J.H."/>
            <person name="Gu Z."/>
            <person name="Guan P."/>
            <person name="Harris M."/>
            <person name="Harris N.L."/>
            <person name="Harvey D.A."/>
            <person name="Heiman T.J."/>
            <person name="Hernandez J.R."/>
            <person name="Houck J."/>
            <person name="Hostin D."/>
            <person name="Houston K.A."/>
            <person name="Howland T.J."/>
            <person name="Wei M.-H."/>
            <person name="Ibegwam C."/>
            <person name="Jalali M."/>
            <person name="Kalush F."/>
            <person name="Karpen G.H."/>
            <person name="Ke Z."/>
            <person name="Kennison J.A."/>
            <person name="Ketchum K.A."/>
            <person name="Kimmel B.E."/>
            <person name="Kodira C.D."/>
            <person name="Kraft C.L."/>
            <person name="Kravitz S."/>
            <person name="Kulp D."/>
            <person name="Lai Z."/>
            <person name="Lasko P."/>
            <person name="Lei Y."/>
            <person name="Levitsky A.A."/>
            <person name="Li J.H."/>
            <person name="Li Z."/>
            <person name="Liang Y."/>
            <person name="Lin X."/>
            <person name="Liu X."/>
            <person name="Mattei B."/>
            <person name="McIntosh T.C."/>
            <person name="McLeod M.P."/>
            <person name="McPherson D."/>
            <person name="Merkulov G."/>
            <person name="Milshina N.V."/>
            <person name="Mobarry C."/>
            <person name="Morris J."/>
            <person name="Moshrefi A."/>
            <person name="Mount S.M."/>
            <person name="Moy M."/>
            <person name="Murphy B."/>
            <person name="Murphy L."/>
            <person name="Muzny D.M."/>
            <person name="Nelson D.L."/>
            <person name="Nelson D.R."/>
            <person name="Nelson K.A."/>
            <person name="Nixon K."/>
            <person name="Nusskern D.R."/>
            <person name="Pacleb J.M."/>
            <person name="Palazzolo M."/>
            <person name="Pittman G.S."/>
            <person name="Pan S."/>
            <person name="Pollard J."/>
            <person name="Puri V."/>
            <person name="Reese M.G."/>
            <person name="Reinert K."/>
            <person name="Remington K."/>
            <person name="Saunders R.D.C."/>
            <person name="Scheeler F."/>
            <person name="Shen H."/>
            <person name="Shue B.C."/>
            <person name="Siden-Kiamos I."/>
            <person name="Simpson M."/>
            <person name="Skupski M.P."/>
            <person name="Smith T.J."/>
            <person name="Spier E."/>
            <person name="Spradling A.C."/>
            <person name="Stapleton M."/>
            <person name="Strong R."/>
            <person name="Sun E."/>
            <person name="Svirskas R."/>
            <person name="Tector C."/>
            <person name="Turner R."/>
            <person name="Venter E."/>
            <person name="Wang A.H."/>
            <person name="Wang X."/>
            <person name="Wang Z.-Y."/>
            <person name="Wassarman D.A."/>
            <person name="Weinstock G.M."/>
            <person name="Weissenbach J."/>
            <person name="Williams S.M."/>
            <person name="Woodage T."/>
            <person name="Worley K.C."/>
            <person name="Wu D."/>
            <person name="Yang S."/>
            <person name="Yao Q.A."/>
            <person name="Ye J."/>
            <person name="Yeh R.-F."/>
            <person name="Zaveri J.S."/>
            <person name="Zhan M."/>
            <person name="Zhang G."/>
            <person name="Zhao Q."/>
            <person name="Zheng L."/>
            <person name="Zheng X.H."/>
            <person name="Zhong F.N."/>
            <person name="Zhong W."/>
            <person name="Zhou X."/>
            <person name="Zhu S.C."/>
            <person name="Zhu X."/>
            <person name="Smith H.O."/>
            <person name="Gibbs R.A."/>
            <person name="Myers E.W."/>
            <person name="Rubin G.M."/>
            <person name="Venter J.C."/>
        </authorList>
    </citation>
    <scope>NUCLEOTIDE SEQUENCE [LARGE SCALE GENOMIC DNA]</scope>
    <source>
        <strain>Berkeley</strain>
    </source>
</reference>
<reference key="4">
    <citation type="journal article" date="2002" name="Genome Biol.">
        <title>Annotation of the Drosophila melanogaster euchromatic genome: a systematic review.</title>
        <authorList>
            <person name="Misra S."/>
            <person name="Crosby M.A."/>
            <person name="Mungall C.J."/>
            <person name="Matthews B.B."/>
            <person name="Campbell K.S."/>
            <person name="Hradecky P."/>
            <person name="Huang Y."/>
            <person name="Kaminker J.S."/>
            <person name="Millburn G.H."/>
            <person name="Prochnik S.E."/>
            <person name="Smith C.D."/>
            <person name="Tupy J.L."/>
            <person name="Whitfield E.J."/>
            <person name="Bayraktaroglu L."/>
            <person name="Berman B.P."/>
            <person name="Bettencourt B.R."/>
            <person name="Celniker S.E."/>
            <person name="de Grey A.D.N.J."/>
            <person name="Drysdale R.A."/>
            <person name="Harris N.L."/>
            <person name="Richter J."/>
            <person name="Russo S."/>
            <person name="Schroeder A.J."/>
            <person name="Shu S.Q."/>
            <person name="Stapleton M."/>
            <person name="Yamada C."/>
            <person name="Ashburner M."/>
            <person name="Gelbart W.M."/>
            <person name="Rubin G.M."/>
            <person name="Lewis S.E."/>
        </authorList>
    </citation>
    <scope>GENOME REANNOTATION</scope>
    <scope>ALTERNATIVE SPLICING</scope>
    <source>
        <strain>Berkeley</strain>
    </source>
</reference>
<reference key="5">
    <citation type="journal article" date="2002" name="Genome Biol.">
        <title>A Drosophila full-length cDNA resource.</title>
        <authorList>
            <person name="Stapleton M."/>
            <person name="Carlson J.W."/>
            <person name="Brokstein P."/>
            <person name="Yu C."/>
            <person name="Champe M."/>
            <person name="George R.A."/>
            <person name="Guarin H."/>
            <person name="Kronmiller B."/>
            <person name="Pacleb J.M."/>
            <person name="Park S."/>
            <person name="Wan K.H."/>
            <person name="Rubin G.M."/>
            <person name="Celniker S.E."/>
        </authorList>
    </citation>
    <scope>NUCLEOTIDE SEQUENCE [LARGE SCALE MRNA] (ISOFORMS A AND B)</scope>
    <source>
        <strain>Berkeley</strain>
        <tissue>Embryo</tissue>
    </source>
</reference>
<reference key="6">
    <citation type="journal article" date="2008" name="J. Proteome Res.">
        <title>Phosphoproteome analysis of Drosophila melanogaster embryos.</title>
        <authorList>
            <person name="Zhai B."/>
            <person name="Villen J."/>
            <person name="Beausoleil S.A."/>
            <person name="Mintseris J."/>
            <person name="Gygi S.P."/>
        </authorList>
    </citation>
    <scope>PHOSPHORYLATION [LARGE SCALE ANALYSIS] AT SER-1110</scope>
    <scope>IDENTIFICATION BY MASS SPECTROMETRY</scope>
    <source>
        <tissue>Embryo</tissue>
    </source>
</reference>
<protein>
    <recommendedName>
        <fullName evidence="10">Bifunctional glutamate/proline--tRNA ligase</fullName>
    </recommendedName>
    <alternativeName>
        <fullName>Bifunctional aminoacyl-tRNA synthetase</fullName>
    </alternativeName>
    <domain>
        <recommendedName>
            <fullName evidence="10">Glutamate--tRNA ligase</fullName>
            <ecNumber evidence="4">6.1.1.17</ecNumber>
        </recommendedName>
        <alternativeName>
            <fullName evidence="7">Glutamyl-tRNA synthetase</fullName>
        </alternativeName>
    </domain>
    <domain>
        <recommendedName>
            <fullName evidence="10">Proline--tRNA ligase</fullName>
            <ecNumber evidence="4">6.1.1.15</ecNumber>
        </recommendedName>
        <alternativeName>
            <fullName>Prolyl-tRNA synthetase</fullName>
            <shortName>ProRS</shortName>
        </alternativeName>
    </domain>
</protein>
<feature type="chain" id="PRO_0000119741" description="Bifunctional glutamate/proline--tRNA ligase">
    <location>
        <begin position="1"/>
        <end position="1714"/>
    </location>
</feature>
<feature type="domain" description="WHEP-TRS 1" evidence="2">
    <location>
        <begin position="744"/>
        <end position="800"/>
    </location>
</feature>
<feature type="domain" description="WHEP-TRS 2" evidence="2">
    <location>
        <begin position="816"/>
        <end position="872"/>
    </location>
</feature>
<feature type="domain" description="WHEP-TRS 3" evidence="2">
    <location>
        <begin position="890"/>
        <end position="946"/>
    </location>
</feature>
<feature type="domain" description="WHEP-TRS 4" evidence="2">
    <location>
        <begin position="969"/>
        <end position="1025"/>
    </location>
</feature>
<feature type="domain" description="WHEP-TRS 5" evidence="2">
    <location>
        <begin position="1044"/>
        <end position="1100"/>
    </location>
</feature>
<feature type="domain" description="WHEP-TRS 6" evidence="2">
    <location>
        <begin position="1118"/>
        <end position="1174"/>
    </location>
</feature>
<feature type="region of interest" description="Disordered" evidence="3">
    <location>
        <begin position="166"/>
        <end position="191"/>
    </location>
</feature>
<feature type="region of interest" description="Glutamate--tRNA ligase" evidence="4">
    <location>
        <begin position="170"/>
        <end position="754"/>
    </location>
</feature>
<feature type="region of interest" description="Disordered" evidence="3">
    <location>
        <begin position="718"/>
        <end position="754"/>
    </location>
</feature>
<feature type="region of interest" description="6 X 57 AA approximate repeats" evidence="7">
    <location>
        <begin position="755"/>
        <end position="1201"/>
    </location>
</feature>
<feature type="region of interest" description="Disordered" evidence="3">
    <location>
        <begin position="791"/>
        <end position="817"/>
    </location>
</feature>
<feature type="region of interest" description="Disordered" evidence="3">
    <location>
        <begin position="943"/>
        <end position="962"/>
    </location>
</feature>
<feature type="region of interest" description="Disordered" evidence="3">
    <location>
        <begin position="1093"/>
        <end position="1119"/>
    </location>
</feature>
<feature type="region of interest" description="Disordered" evidence="3">
    <location>
        <begin position="1168"/>
        <end position="1210"/>
    </location>
</feature>
<feature type="region of interest" description="Proline--tRNA ligase" evidence="4">
    <location>
        <begin position="1207"/>
        <end position="1714"/>
    </location>
</feature>
<feature type="short sequence motif" description="'HIGH' region" evidence="7">
    <location>
        <begin position="209"/>
        <end position="220"/>
    </location>
</feature>
<feature type="short sequence motif" description="'KMSKS' region" evidence="7">
    <location>
        <begin position="438"/>
        <end position="442"/>
    </location>
</feature>
<feature type="compositionally biased region" description="Polar residues" evidence="3">
    <location>
        <begin position="172"/>
        <end position="182"/>
    </location>
</feature>
<feature type="compositionally biased region" description="Low complexity" evidence="3">
    <location>
        <begin position="734"/>
        <end position="746"/>
    </location>
</feature>
<feature type="compositionally biased region" description="Low complexity" evidence="3">
    <location>
        <begin position="800"/>
        <end position="817"/>
    </location>
</feature>
<feature type="compositionally biased region" description="Basic and acidic residues" evidence="3">
    <location>
        <begin position="1094"/>
        <end position="1109"/>
    </location>
</feature>
<feature type="compositionally biased region" description="Gly residues" evidence="3">
    <location>
        <begin position="1172"/>
        <end position="1181"/>
    </location>
</feature>
<feature type="binding site" evidence="1">
    <location>
        <begin position="1322"/>
        <end position="1324"/>
    </location>
    <ligand>
        <name>L-proline</name>
        <dbReference type="ChEBI" id="CHEBI:60039"/>
    </ligand>
</feature>
<feature type="binding site" evidence="1">
    <location>
        <position position="1353"/>
    </location>
    <ligand>
        <name>ATP</name>
        <dbReference type="ChEBI" id="CHEBI:30616"/>
    </ligand>
</feature>
<feature type="binding site" evidence="1">
    <location>
        <position position="1353"/>
    </location>
    <ligand>
        <name>L-proline</name>
        <dbReference type="ChEBI" id="CHEBI:60039"/>
    </ligand>
</feature>
<feature type="binding site" evidence="1">
    <location>
        <position position="1355"/>
    </location>
    <ligand>
        <name>ATP</name>
        <dbReference type="ChEBI" id="CHEBI:30616"/>
    </ligand>
</feature>
<feature type="binding site" evidence="1">
    <location>
        <position position="1364"/>
    </location>
    <ligand>
        <name>ATP</name>
        <dbReference type="ChEBI" id="CHEBI:30616"/>
    </ligand>
</feature>
<feature type="binding site" evidence="1">
    <location>
        <position position="1365"/>
    </location>
    <ligand>
        <name>ATP</name>
        <dbReference type="ChEBI" id="CHEBI:30616"/>
    </ligand>
</feature>
<feature type="binding site" evidence="1">
    <location>
        <position position="1438"/>
    </location>
    <ligand>
        <name>ATP</name>
        <dbReference type="ChEBI" id="CHEBI:30616"/>
    </ligand>
</feature>
<feature type="binding site" evidence="1">
    <location>
        <position position="1438"/>
    </location>
    <ligand>
        <name>Mg(2+)</name>
        <dbReference type="ChEBI" id="CHEBI:18420"/>
    </ligand>
</feature>
<feature type="binding site" evidence="1">
    <location>
        <position position="1441"/>
    </location>
    <ligand>
        <name>ATP</name>
        <dbReference type="ChEBI" id="CHEBI:30616"/>
    </ligand>
</feature>
<feature type="binding site" evidence="1">
    <location>
        <position position="1443"/>
    </location>
    <ligand>
        <name>L-proline</name>
        <dbReference type="ChEBI" id="CHEBI:60039"/>
    </ligand>
</feature>
<feature type="binding site" evidence="1">
    <location>
        <position position="1476"/>
    </location>
    <ligand>
        <name>ATP</name>
        <dbReference type="ChEBI" id="CHEBI:30616"/>
    </ligand>
</feature>
<feature type="binding site" evidence="1">
    <location>
        <position position="1478"/>
    </location>
    <ligand>
        <name>ATP</name>
        <dbReference type="ChEBI" id="CHEBI:30616"/>
    </ligand>
</feature>
<feature type="binding site" evidence="1">
    <location>
        <position position="1648"/>
    </location>
    <ligand>
        <name>Zn(2+)</name>
        <dbReference type="ChEBI" id="CHEBI:29105"/>
    </ligand>
</feature>
<feature type="binding site" evidence="1">
    <location>
        <position position="1653"/>
    </location>
    <ligand>
        <name>Zn(2+)</name>
        <dbReference type="ChEBI" id="CHEBI:29105"/>
    </ligand>
</feature>
<feature type="binding site" evidence="1">
    <location>
        <position position="1695"/>
    </location>
    <ligand>
        <name>Zn(2+)</name>
        <dbReference type="ChEBI" id="CHEBI:29105"/>
    </ligand>
</feature>
<feature type="modified residue" description="Phosphoserine" evidence="5">
    <location>
        <position position="1110"/>
    </location>
</feature>
<feature type="splice variant" id="VSP_009609" description="In isoform B." evidence="6">
    <location>
        <begin position="1"/>
        <end position="718"/>
    </location>
</feature>
<feature type="splice variant" id="VSP_009610" description="In isoform B." evidence="6">
    <original>TSGLKVNAPDAKAT</original>
    <variation>MLNYLACGSLSSTS</variation>
    <location>
        <begin position="719"/>
        <end position="732"/>
    </location>
</feature>
<feature type="sequence conflict" description="In Ref. 1 and 2." evidence="9" ref="1 2">
    <original>DKSIA</original>
    <variation>TSPLP</variation>
    <location>
        <begin position="102"/>
        <end position="106"/>
    </location>
</feature>
<feature type="sequence conflict" description="In Ref. 1 and 2." evidence="9" ref="1 2">
    <original>AF</original>
    <variation>VC</variation>
    <location>
        <begin position="233"/>
        <end position="234"/>
    </location>
</feature>
<feature type="sequence conflict" description="In Ref. 1 and 2." evidence="9" ref="1 2">
    <original>KYCVR</original>
    <variation>NTACA</variation>
    <location>
        <begin position="341"/>
        <end position="345"/>
    </location>
</feature>
<feature type="sequence conflict" description="In Ref. 1 and 2." evidence="9" ref="1 2">
    <original>R</original>
    <variation>K</variation>
    <location>
        <position position="583"/>
    </location>
</feature>
<feature type="sequence conflict" description="In Ref. 1 and 2." evidence="9" ref="1 2">
    <original>A</original>
    <variation>L</variation>
    <location>
        <position position="692"/>
    </location>
</feature>
<feature type="sequence conflict" description="In Ref. 1 and 2." evidence="9" ref="1 2">
    <original>S</original>
    <variation>T</variation>
    <location>
        <position position="753"/>
    </location>
</feature>
<feature type="sequence conflict" description="In Ref. 1 and 2." evidence="9" ref="1 2">
    <original>S</original>
    <variation>T</variation>
    <location>
        <position position="802"/>
    </location>
</feature>
<feature type="sequence conflict" description="In Ref. 1 and 2." evidence="9" ref="1 2">
    <original>T</original>
    <variation>P</variation>
    <location>
        <position position="873"/>
    </location>
</feature>
<feature type="sequence conflict" description="In Ref. 1 and 2." evidence="9" ref="1 2">
    <original>V</original>
    <variation>G</variation>
    <location>
        <position position="887"/>
    </location>
</feature>
<feature type="sequence conflict" description="In Ref. 5; AAN71400." evidence="9" ref="5">
    <original>D</original>
    <variation>G</variation>
    <location>
        <position position="1035"/>
    </location>
</feature>
<feature type="sequence conflict" description="In Ref. 1 and 2." evidence="9" ref="1 2">
    <location>
        <position position="1202"/>
    </location>
</feature>
<feature type="sequence conflict" description="In Ref. 1 and 2." evidence="9" ref="1 2">
    <original>E</original>
    <variation>EK</variation>
    <location>
        <position position="1461"/>
    </location>
</feature>
<feature type="sequence conflict" description="In Ref. 1 and 2." evidence="9" ref="1 2">
    <original>V</original>
    <variation>G</variation>
    <location>
        <position position="1587"/>
    </location>
</feature>
<evidence type="ECO:0000250" key="1">
    <source>
        <dbReference type="UniProtKB" id="P07814"/>
    </source>
</evidence>
<evidence type="ECO:0000255" key="2">
    <source>
        <dbReference type="PROSITE-ProRule" id="PRU00531"/>
    </source>
</evidence>
<evidence type="ECO:0000256" key="3">
    <source>
        <dbReference type="SAM" id="MobiDB-lite"/>
    </source>
</evidence>
<evidence type="ECO:0000269" key="4">
    <source>
    </source>
</evidence>
<evidence type="ECO:0000269" key="5">
    <source>
    </source>
</evidence>
<evidence type="ECO:0000303" key="6">
    <source>
    </source>
</evidence>
<evidence type="ECO:0000303" key="7">
    <source>
    </source>
</evidence>
<evidence type="ECO:0000303" key="8">
    <source>
    </source>
</evidence>
<evidence type="ECO:0000305" key="9"/>
<evidence type="ECO:0000305" key="10">
    <source>
    </source>
</evidence>
<evidence type="ECO:0000312" key="11">
    <source>
        <dbReference type="FlyBase" id="FBgn0005674"/>
    </source>
</evidence>
<dbReference type="EC" id="6.1.1.17" evidence="4"/>
<dbReference type="EC" id="6.1.1.15" evidence="4"/>
<dbReference type="EMBL" id="M74104">
    <property type="protein sequence ID" value="AAA28594.1"/>
    <property type="molecule type" value="mRNA"/>
</dbReference>
<dbReference type="EMBL" id="U59923">
    <property type="protein sequence ID" value="AAC47469.1"/>
    <property type="molecule type" value="Genomic_DNA"/>
</dbReference>
<dbReference type="EMBL" id="AE014297">
    <property type="protein sequence ID" value="AAF56211.1"/>
    <property type="molecule type" value="Genomic_DNA"/>
</dbReference>
<dbReference type="EMBL" id="AE014297">
    <property type="protein sequence ID" value="AAN13964.1"/>
    <property type="molecule type" value="Genomic_DNA"/>
</dbReference>
<dbReference type="EMBL" id="AY058703">
    <property type="protein sequence ID" value="AAL13932.1"/>
    <property type="molecule type" value="mRNA"/>
</dbReference>
<dbReference type="EMBL" id="BT001645">
    <property type="protein sequence ID" value="AAN71400.1"/>
    <property type="status" value="ALT_INIT"/>
    <property type="molecule type" value="mRNA"/>
</dbReference>
<dbReference type="PIR" id="S18644">
    <property type="entry name" value="S18644"/>
</dbReference>
<dbReference type="RefSeq" id="NP_524471.2">
    <molecule id="P28668-1"/>
    <property type="nucleotide sequence ID" value="NM_079747.3"/>
</dbReference>
<dbReference type="RefSeq" id="NP_732925.1">
    <molecule id="P28668-2"/>
    <property type="nucleotide sequence ID" value="NM_170103.2"/>
</dbReference>
<dbReference type="SMR" id="P28668"/>
<dbReference type="BioGRID" id="67770">
    <property type="interactions" value="53"/>
</dbReference>
<dbReference type="FunCoup" id="P28668">
    <property type="interactions" value="1487"/>
</dbReference>
<dbReference type="IntAct" id="P28668">
    <property type="interactions" value="25"/>
</dbReference>
<dbReference type="STRING" id="7227.FBpp0083898"/>
<dbReference type="iPTMnet" id="P28668"/>
<dbReference type="PaxDb" id="7227-FBpp0083898"/>
<dbReference type="DNASU" id="42834"/>
<dbReference type="EnsemblMetazoa" id="FBtr0084511">
    <molecule id="P28668-1"/>
    <property type="protein sequence ID" value="FBpp0083898"/>
    <property type="gene ID" value="FBgn0005674"/>
</dbReference>
<dbReference type="EnsemblMetazoa" id="FBtr0084512">
    <molecule id="P28668-2"/>
    <property type="protein sequence ID" value="FBpp0083899"/>
    <property type="gene ID" value="FBgn0005674"/>
</dbReference>
<dbReference type="GeneID" id="42834"/>
<dbReference type="KEGG" id="dme:Dmel_CG5394"/>
<dbReference type="AGR" id="FB:FBgn0005674"/>
<dbReference type="CTD" id="42834"/>
<dbReference type="FlyBase" id="FBgn0005674">
    <property type="gene designation" value="GluProRS"/>
</dbReference>
<dbReference type="VEuPathDB" id="VectorBase:FBgn0005674"/>
<dbReference type="eggNOG" id="KOG1147">
    <property type="taxonomic scope" value="Eukaryota"/>
</dbReference>
<dbReference type="eggNOG" id="KOG4163">
    <property type="taxonomic scope" value="Eukaryota"/>
</dbReference>
<dbReference type="GeneTree" id="ENSGT00550000074815"/>
<dbReference type="HOGENOM" id="CLU_001882_0_0_1"/>
<dbReference type="InParanoid" id="P28668"/>
<dbReference type="OMA" id="NVTFINW"/>
<dbReference type="OrthoDB" id="1350766at2759"/>
<dbReference type="PhylomeDB" id="P28668"/>
<dbReference type="Reactome" id="R-DME-9856649">
    <property type="pathway name" value="Transcriptional and post-translational regulation of MITF-M expression and activity"/>
</dbReference>
<dbReference type="BioGRID-ORCS" id="42834">
    <property type="hits" value="0 hits in 3 CRISPR screens"/>
</dbReference>
<dbReference type="GenomeRNAi" id="42834"/>
<dbReference type="PRO" id="PR:P28668"/>
<dbReference type="Proteomes" id="UP000000803">
    <property type="component" value="Chromosome 3R"/>
</dbReference>
<dbReference type="Bgee" id="FBgn0005674">
    <property type="expression patterns" value="Expressed in eye disc (Drosophila) and 78 other cell types or tissues"/>
</dbReference>
<dbReference type="ExpressionAtlas" id="P28668">
    <property type="expression patterns" value="baseline and differential"/>
</dbReference>
<dbReference type="GO" id="GO:0017101">
    <property type="term" value="C:aminoacyl-tRNA synthetase multienzyme complex"/>
    <property type="evidence" value="ECO:0000314"/>
    <property type="project" value="FlyBase"/>
</dbReference>
<dbReference type="GO" id="GO:0005737">
    <property type="term" value="C:cytoplasm"/>
    <property type="evidence" value="ECO:0000318"/>
    <property type="project" value="GO_Central"/>
</dbReference>
<dbReference type="GO" id="GO:0005524">
    <property type="term" value="F:ATP binding"/>
    <property type="evidence" value="ECO:0007669"/>
    <property type="project" value="UniProtKB-KW"/>
</dbReference>
<dbReference type="GO" id="GO:0004818">
    <property type="term" value="F:glutamate-tRNA ligase activity"/>
    <property type="evidence" value="ECO:0000314"/>
    <property type="project" value="UniProtKB"/>
</dbReference>
<dbReference type="GO" id="GO:0046872">
    <property type="term" value="F:metal ion binding"/>
    <property type="evidence" value="ECO:0007669"/>
    <property type="project" value="UniProtKB-KW"/>
</dbReference>
<dbReference type="GO" id="GO:0004827">
    <property type="term" value="F:proline-tRNA ligase activity"/>
    <property type="evidence" value="ECO:0000314"/>
    <property type="project" value="UniProtKB"/>
</dbReference>
<dbReference type="GO" id="GO:0003723">
    <property type="term" value="F:RNA binding"/>
    <property type="evidence" value="ECO:0007669"/>
    <property type="project" value="UniProtKB-KW"/>
</dbReference>
<dbReference type="GO" id="GO:0006424">
    <property type="term" value="P:glutamyl-tRNA aminoacylation"/>
    <property type="evidence" value="ECO:0000314"/>
    <property type="project" value="UniProtKB"/>
</dbReference>
<dbReference type="GO" id="GO:0006433">
    <property type="term" value="P:prolyl-tRNA aminoacylation"/>
    <property type="evidence" value="ECO:0000314"/>
    <property type="project" value="UniProtKB"/>
</dbReference>
<dbReference type="CDD" id="cd00807">
    <property type="entry name" value="GlnRS_core"/>
    <property type="match status" value="1"/>
</dbReference>
<dbReference type="CDD" id="cd10309">
    <property type="entry name" value="GST_C_GluProRS_N"/>
    <property type="match status" value="1"/>
</dbReference>
<dbReference type="CDD" id="cd00862">
    <property type="entry name" value="ProRS_anticodon_zinc"/>
    <property type="match status" value="1"/>
</dbReference>
<dbReference type="CDD" id="cd00778">
    <property type="entry name" value="ProRS_core_arch_euk"/>
    <property type="match status" value="1"/>
</dbReference>
<dbReference type="CDD" id="cd00936">
    <property type="entry name" value="WEPRS_RNA"/>
    <property type="match status" value="6"/>
</dbReference>
<dbReference type="FunFam" id="1.10.287.10:FF:000006">
    <property type="entry name" value="Bifunctional glutamate/proline--tRNA ligase"/>
    <property type="match status" value="6"/>
</dbReference>
<dbReference type="FunFam" id="1.20.1050.130:FF:000007">
    <property type="entry name" value="Bifunctional glutamate/proline--tRNA ligase"/>
    <property type="match status" value="1"/>
</dbReference>
<dbReference type="FunFam" id="3.30.110.30:FF:000001">
    <property type="entry name" value="Bifunctional glutamate/proline--tRNA ligase"/>
    <property type="match status" value="1"/>
</dbReference>
<dbReference type="FunFam" id="3.30.930.10:FF:000007">
    <property type="entry name" value="Bifunctional glutamate/proline--tRNA ligase"/>
    <property type="match status" value="1"/>
</dbReference>
<dbReference type="FunFam" id="3.40.50.620:FF:000070">
    <property type="entry name" value="Bifunctional glutamate/proline--tRNA ligase"/>
    <property type="match status" value="1"/>
</dbReference>
<dbReference type="FunFam" id="3.40.50.800:FF:000005">
    <property type="entry name" value="bifunctional glutamate/proline--tRNA ligase"/>
    <property type="match status" value="1"/>
</dbReference>
<dbReference type="FunFam" id="1.10.1160.10:FF:000001">
    <property type="entry name" value="Glutamine--tRNA ligase"/>
    <property type="match status" value="1"/>
</dbReference>
<dbReference type="FunFam" id="3.90.800.10:FF:000001">
    <property type="entry name" value="Glutamine--tRNA ligase"/>
    <property type="match status" value="1"/>
</dbReference>
<dbReference type="Gene3D" id="1.20.1050.130">
    <property type="match status" value="1"/>
</dbReference>
<dbReference type="Gene3D" id="3.40.50.800">
    <property type="entry name" value="Anticodon-binding domain"/>
    <property type="match status" value="1"/>
</dbReference>
<dbReference type="Gene3D" id="3.30.930.10">
    <property type="entry name" value="Bira Bifunctional Protein, Domain 2"/>
    <property type="match status" value="1"/>
</dbReference>
<dbReference type="Gene3D" id="3.30.110.30">
    <property type="entry name" value="C-terminal domain of ProRS"/>
    <property type="match status" value="1"/>
</dbReference>
<dbReference type="Gene3D" id="1.10.1160.10">
    <property type="entry name" value="Glutamyl-trna Synthetase, Domain 2"/>
    <property type="match status" value="1"/>
</dbReference>
<dbReference type="Gene3D" id="3.90.800.10">
    <property type="entry name" value="Glutamyl-tRNA Synthetase, Domain 3"/>
    <property type="match status" value="1"/>
</dbReference>
<dbReference type="Gene3D" id="3.40.50.620">
    <property type="entry name" value="HUPs"/>
    <property type="match status" value="1"/>
</dbReference>
<dbReference type="Gene3D" id="2.40.240.10">
    <property type="entry name" value="Ribosomal Protein L25, Chain P"/>
    <property type="match status" value="1"/>
</dbReference>
<dbReference type="Gene3D" id="1.10.287.10">
    <property type="entry name" value="S15/NS1, RNA-binding"/>
    <property type="match status" value="6"/>
</dbReference>
<dbReference type="HAMAP" id="MF_02076">
    <property type="entry name" value="Glu_tRNA_synth_type2"/>
    <property type="match status" value="1"/>
</dbReference>
<dbReference type="HAMAP" id="MF_01571">
    <property type="entry name" value="Pro_tRNA_synth_type3"/>
    <property type="match status" value="1"/>
</dbReference>
<dbReference type="InterPro" id="IPR002314">
    <property type="entry name" value="aa-tRNA-synt_IIb"/>
</dbReference>
<dbReference type="InterPro" id="IPR001412">
    <property type="entry name" value="aa-tRNA-synth_I_CS"/>
</dbReference>
<dbReference type="InterPro" id="IPR006195">
    <property type="entry name" value="aa-tRNA-synth_II"/>
</dbReference>
<dbReference type="InterPro" id="IPR045864">
    <property type="entry name" value="aa-tRNA-synth_II/BPL/LPL"/>
</dbReference>
<dbReference type="InterPro" id="IPR004154">
    <property type="entry name" value="Anticodon-bd"/>
</dbReference>
<dbReference type="InterPro" id="IPR036621">
    <property type="entry name" value="Anticodon-bd_dom_sf"/>
</dbReference>
<dbReference type="InterPro" id="IPR004526">
    <property type="entry name" value="Glu-tRNA-synth_arc/euk"/>
</dbReference>
<dbReference type="InterPro" id="IPR000924">
    <property type="entry name" value="Glu/Gln-tRNA-synth"/>
</dbReference>
<dbReference type="InterPro" id="IPR020058">
    <property type="entry name" value="Glu/Gln-tRNA-synth_Ib_cat-dom"/>
</dbReference>
<dbReference type="InterPro" id="IPR020059">
    <property type="entry name" value="Glu/Gln-tRNA-synth_Ib_codon-bd"/>
</dbReference>
<dbReference type="InterPro" id="IPR020061">
    <property type="entry name" value="Glu_tRNA_lig_a-bdl"/>
</dbReference>
<dbReference type="InterPro" id="IPR036282">
    <property type="entry name" value="Glutathione-S-Trfase_C_sf"/>
</dbReference>
<dbReference type="InterPro" id="IPR004499">
    <property type="entry name" value="Pro-tRNA-ligase_IIa_arc-type"/>
</dbReference>
<dbReference type="InterPro" id="IPR016061">
    <property type="entry name" value="Pro-tRNA_ligase_II_C"/>
</dbReference>
<dbReference type="InterPro" id="IPR017449">
    <property type="entry name" value="Pro-tRNA_synth_II"/>
</dbReference>
<dbReference type="InterPro" id="IPR033721">
    <property type="entry name" value="ProRS_core_arch_euk"/>
</dbReference>
<dbReference type="InterPro" id="IPR020056">
    <property type="entry name" value="Rbsml_bL25/Gln-tRNA_synth_N"/>
</dbReference>
<dbReference type="InterPro" id="IPR011035">
    <property type="entry name" value="Ribosomal_bL25/Gln-tRNA_synth"/>
</dbReference>
<dbReference type="InterPro" id="IPR014729">
    <property type="entry name" value="Rossmann-like_a/b/a_fold"/>
</dbReference>
<dbReference type="InterPro" id="IPR049437">
    <property type="entry name" value="tRNA-synt_1c_C2"/>
</dbReference>
<dbReference type="InterPro" id="IPR009068">
    <property type="entry name" value="uS15_NS1_RNA-bd_sf"/>
</dbReference>
<dbReference type="InterPro" id="IPR000738">
    <property type="entry name" value="WHEP-TRS_dom"/>
</dbReference>
<dbReference type="NCBIfam" id="TIGR00463">
    <property type="entry name" value="gltX_arch"/>
    <property type="match status" value="1"/>
</dbReference>
<dbReference type="NCBIfam" id="TIGR00408">
    <property type="entry name" value="proS_fam_I"/>
    <property type="match status" value="1"/>
</dbReference>
<dbReference type="PANTHER" id="PTHR43382:SF2">
    <property type="entry name" value="BIFUNCTIONAL GLUTAMATE_PROLINE--TRNA LIGASE"/>
    <property type="match status" value="1"/>
</dbReference>
<dbReference type="PANTHER" id="PTHR43382">
    <property type="entry name" value="PROLYL-TRNA SYNTHETASE"/>
    <property type="match status" value="1"/>
</dbReference>
<dbReference type="Pfam" id="PF03129">
    <property type="entry name" value="HGTP_anticodon"/>
    <property type="match status" value="1"/>
</dbReference>
<dbReference type="Pfam" id="PF09180">
    <property type="entry name" value="ProRS-C_1"/>
    <property type="match status" value="1"/>
</dbReference>
<dbReference type="Pfam" id="PF00749">
    <property type="entry name" value="tRNA-synt_1c"/>
    <property type="match status" value="1"/>
</dbReference>
<dbReference type="Pfam" id="PF03950">
    <property type="entry name" value="tRNA-synt_1c_C"/>
    <property type="match status" value="1"/>
</dbReference>
<dbReference type="Pfam" id="PF20974">
    <property type="entry name" value="tRNA-synt_1c_C2"/>
    <property type="match status" value="1"/>
</dbReference>
<dbReference type="Pfam" id="PF00587">
    <property type="entry name" value="tRNA-synt_2b"/>
    <property type="match status" value="1"/>
</dbReference>
<dbReference type="Pfam" id="PF00458">
    <property type="entry name" value="WHEP-TRS"/>
    <property type="match status" value="6"/>
</dbReference>
<dbReference type="PRINTS" id="PR00987">
    <property type="entry name" value="TRNASYNTHGLU"/>
</dbReference>
<dbReference type="SMART" id="SM00946">
    <property type="entry name" value="ProRS-C_1"/>
    <property type="match status" value="1"/>
</dbReference>
<dbReference type="SMART" id="SM00991">
    <property type="entry name" value="WHEP-TRS"/>
    <property type="match status" value="6"/>
</dbReference>
<dbReference type="SUPFAM" id="SSF64586">
    <property type="entry name" value="C-terminal domain of ProRS"/>
    <property type="match status" value="1"/>
</dbReference>
<dbReference type="SUPFAM" id="SSF52954">
    <property type="entry name" value="Class II aaRS ABD-related"/>
    <property type="match status" value="1"/>
</dbReference>
<dbReference type="SUPFAM" id="SSF55681">
    <property type="entry name" value="Class II aaRS and biotin synthetases"/>
    <property type="match status" value="1"/>
</dbReference>
<dbReference type="SUPFAM" id="SSF47616">
    <property type="entry name" value="GST C-terminal domain-like"/>
    <property type="match status" value="1"/>
</dbReference>
<dbReference type="SUPFAM" id="SSF52374">
    <property type="entry name" value="Nucleotidylyl transferase"/>
    <property type="match status" value="1"/>
</dbReference>
<dbReference type="SUPFAM" id="SSF50715">
    <property type="entry name" value="Ribosomal protein L25-like"/>
    <property type="match status" value="1"/>
</dbReference>
<dbReference type="SUPFAM" id="SSF47060">
    <property type="entry name" value="S15/NS1 RNA-binding domain"/>
    <property type="match status" value="6"/>
</dbReference>
<dbReference type="PROSITE" id="PS00178">
    <property type="entry name" value="AA_TRNA_LIGASE_I"/>
    <property type="match status" value="1"/>
</dbReference>
<dbReference type="PROSITE" id="PS50862">
    <property type="entry name" value="AA_TRNA_LIGASE_II"/>
    <property type="match status" value="1"/>
</dbReference>
<dbReference type="PROSITE" id="PS00762">
    <property type="entry name" value="WHEP_TRS_1"/>
    <property type="match status" value="6"/>
</dbReference>
<dbReference type="PROSITE" id="PS51185">
    <property type="entry name" value="WHEP_TRS_2"/>
    <property type="match status" value="6"/>
</dbReference>
<accession>P28668</accession>
<accession>Q8IGR4</accession>
<accession>Q8IMX9</accession>
<accession>Q95TL3</accession>
<accession>Q9VCF5</accession>
<sequence>MSIKLKANLNNPPISGLATAHLINGTVPVEIVWSKEETSLQFPDNRLLVCHSNNDVLRALARAAPDYKLYGETAIERTQIDHWLSFSLTCEDDISWALSFLDKSIAPVTYLVANKLTIADFALFNEMHSRYEFLAAKGIPQHVQRWYDLITAQPLIQKVLQSLPEDAKVKRSPQSSKEQTPAKTGERKQEGKFVDLPGAEMGKVVVRFPPEASGYLHIGHAKAALLNQYYALAFQGTLIMRFDDTNPAKETVEFENVILGDLEQLQIKPDVFTHTSNYFDLMLDYCVRLIKESKAYVDDTPPEQMKLEREQRVESANRSNSVEKNLSLWEEMVKGSEKGQKYCVRAKIDMSSPNGCMRDPTIYRCKNEPHPRTGTKYKVYPTYDFACPIVDAIENVTHTLRTTEYHDRDDQFYWFIDALKLRKPYIWSYSRLNMTNTVLSKRKLTWFVDSGLVDGWDDPRFPTVRGIIRRGMTVEGLKEFIIAQGSSKSVVFMNWDKIWAFNKKVIDPIAPRYTALEKEKRVIVNVAGAKVERIQVSVHPKDESLGKKTVLLGPRIYIDYVDAEALKEGENATFINWGNILIRKVNKDASGNITSVDAALNLENKDFKKTLKLTWLAVEDDPSAYPPTFCVYFDNIISKAVLGKDEDFKQFIGHKTRDEVPMLGDPELKKCKKGDIIQLQRRGFFKVDVAYAPPSGYTNVPSPIVLFSIPDGHTKDVPTSGLKVNAPDAKATKKASSPVSSSGQASELDSQISQQGDLVRDLKSKKAAKDQIDVAVKKLLALKADYKSATGKDWKPGQTSASSAPVPAASSSSANDAVSVNASIVKQGDLVRDLKGKKASKPEIDAAVKTLLELKAQYKTLTGQDWKPGTVPTTAAPSASAAPSVGVNDSVAQILSQITAQGDKVRELKSAKADKATVDAAVKTLLSLKADYKAATGSDWKPGTTAPAPAAAPVKVKQEKNPDPASVLTVNTLLNKIAQQGDKIRQLKSAKSEKSLVEAEVKLLLALKTDYKSLTGQEWKPGTVAPAPTTVNVIDLTGGDSGSDVGSVLSKIQAQGDKIRKLKSEKAAKNVIDPEVKTLLALKGEYKTLSGKDWTPDAKSEPAVVKKEASPVSMASPAKDELTQEINAQGEKVRAAKGNKAAKEVIDAEVAKLLALKAKYKEVTGTDFPVAGRGGGGGGGSAKKAPKEAQPKPAKPVKKEPAADASGAVKKQTRLGLEATKEDNLPDWYSQVITKGEMIEYYDVSGCYILRQWSFAIWKAIKTWFDAEITRMGVKECYFPIFVSKAVLEKEKTHIADFAPEVAWVTKSGDSDLAEPIAVRPTSETVMYPAYAKWVQSYRDLPIRLNQWNNVVRWEFKQPTPFLRTREFLWQEGHTAFADKEEAAKEVLDILDLYALVYTHLLAIPVVKGRKTEKEKFAGGDYTTTVEAFISASGRAIQGATSHHLGQNFSKMFEIVYEDPETQQKKYVYQNSWGITTRTIGVMIMVHADNQGLVLPPHVACIQAIVVPCGITVNTKDDERAQLLDACKALEKRLVGGGVRCEGDYRDNYSPGWKFNHWELKGVPLRLEVGPKDLKAQQLVAVRRDTVEKITIPLADVEKKIPALLETIHESMLNKAQEDMTSHTKKVTNWTDFCGFLEQKNILLAPFCGEISCEDKIKADSARGEEAEPGAPAMGAKSLCIPFDQPAPIAASDKCINPSCTNKPKFYTLFGRSY</sequence>
<comment type="function">
    <text evidence="4">Catalyzes the attachment of both L-glutamate and L-proline to their cognate tRNAs in a two-step reaction where the amino acid is first activated by ATP to form a covalent intermediate with AMP. Subsequently, the activated amino acid is transferred to the acceptor end of the cognate tRNA to form L-glutamyl-tRNA(Glu) and L-prolyl-tRNA(Pro).</text>
</comment>
<comment type="catalytic activity">
    <reaction evidence="4">
        <text>tRNA(Glu) + L-glutamate + ATP = L-glutamyl-tRNA(Glu) + AMP + diphosphate</text>
        <dbReference type="Rhea" id="RHEA:23540"/>
        <dbReference type="Rhea" id="RHEA-COMP:9663"/>
        <dbReference type="Rhea" id="RHEA-COMP:9680"/>
        <dbReference type="ChEBI" id="CHEBI:29985"/>
        <dbReference type="ChEBI" id="CHEBI:30616"/>
        <dbReference type="ChEBI" id="CHEBI:33019"/>
        <dbReference type="ChEBI" id="CHEBI:78442"/>
        <dbReference type="ChEBI" id="CHEBI:78520"/>
        <dbReference type="ChEBI" id="CHEBI:456215"/>
        <dbReference type="EC" id="6.1.1.17"/>
    </reaction>
    <physiologicalReaction direction="left-to-right" evidence="10">
        <dbReference type="Rhea" id="RHEA:23541"/>
    </physiologicalReaction>
</comment>
<comment type="catalytic activity">
    <reaction evidence="4">
        <text>tRNA(Pro) + L-proline + ATP = L-prolyl-tRNA(Pro) + AMP + diphosphate</text>
        <dbReference type="Rhea" id="RHEA:14305"/>
        <dbReference type="Rhea" id="RHEA-COMP:9700"/>
        <dbReference type="Rhea" id="RHEA-COMP:9702"/>
        <dbReference type="ChEBI" id="CHEBI:30616"/>
        <dbReference type="ChEBI" id="CHEBI:33019"/>
        <dbReference type="ChEBI" id="CHEBI:60039"/>
        <dbReference type="ChEBI" id="CHEBI:78442"/>
        <dbReference type="ChEBI" id="CHEBI:78532"/>
        <dbReference type="ChEBI" id="CHEBI:456215"/>
        <dbReference type="EC" id="6.1.1.15"/>
    </reaction>
    <physiologicalReaction direction="left-to-right" evidence="10">
        <dbReference type="Rhea" id="RHEA:14306"/>
    </physiologicalReaction>
</comment>
<comment type="subunit">
    <text evidence="1">Component of the multisynthetase complex which is comprised of a bifunctional glutamyl-prolyl-tRNA synthetase, the monospecific isoleucyl, leucyl, glutaminyl, methionyl, lysyl, arginyl, and aspartyl-tRNA synthetases as well as three auxiliary proteins, p18, p48 and p43.</text>
</comment>
<comment type="alternative products">
    <event type="alternative splicing"/>
    <isoform>
        <id>P28668-1</id>
        <name>A</name>
        <sequence type="displayed"/>
    </isoform>
    <isoform>
        <id>P28668-2</id>
        <name>B</name>
        <sequence type="described" ref="VSP_009609 VSP_009610"/>
    </isoform>
</comment>
<comment type="similarity">
    <text evidence="9">In the N-terminal section; belongs to the class-I aminoacyl-tRNA synthetase family. Glutamate--tRNA ligase type 2 subfamily.</text>
</comment>
<comment type="similarity">
    <text evidence="9">In the C-terminal section; belongs to the class-II aminoacyl-tRNA synthetase family.</text>
</comment>
<comment type="sequence caution" evidence="9">
    <conflict type="erroneous initiation">
        <sequence resource="EMBL-CDS" id="AAN71400"/>
    </conflict>
</comment>
<keyword id="KW-0025">Alternative splicing</keyword>
<keyword id="KW-0030">Aminoacyl-tRNA synthetase</keyword>
<keyword id="KW-0067">ATP-binding</keyword>
<keyword id="KW-0436">Ligase</keyword>
<keyword id="KW-0460">Magnesium</keyword>
<keyword id="KW-0479">Metal-binding</keyword>
<keyword id="KW-0511">Multifunctional enzyme</keyword>
<keyword id="KW-0547">Nucleotide-binding</keyword>
<keyword id="KW-0597">Phosphoprotein</keyword>
<keyword id="KW-0648">Protein biosynthesis</keyword>
<keyword id="KW-1185">Reference proteome</keyword>
<keyword id="KW-0677">Repeat</keyword>
<keyword id="KW-0694">RNA-binding</keyword>
<keyword id="KW-0862">Zinc</keyword>
<proteinExistence type="evidence at protein level"/>
<organism>
    <name type="scientific">Drosophila melanogaster</name>
    <name type="common">Fruit fly</name>
    <dbReference type="NCBI Taxonomy" id="7227"/>
    <lineage>
        <taxon>Eukaryota</taxon>
        <taxon>Metazoa</taxon>
        <taxon>Ecdysozoa</taxon>
        <taxon>Arthropoda</taxon>
        <taxon>Hexapoda</taxon>
        <taxon>Insecta</taxon>
        <taxon>Pterygota</taxon>
        <taxon>Neoptera</taxon>
        <taxon>Endopterygota</taxon>
        <taxon>Diptera</taxon>
        <taxon>Brachycera</taxon>
        <taxon>Muscomorpha</taxon>
        <taxon>Ephydroidea</taxon>
        <taxon>Drosophilidae</taxon>
        <taxon>Drosophila</taxon>
        <taxon>Sophophora</taxon>
    </lineage>
</organism>
<name>SYEP_DROME</name>